<comment type="function">
    <text evidence="1">This protein is involved in the repair of mismatches in DNA. It is possible that it carries out the mismatch recognition step. This protein has a weak ATPase activity.</text>
</comment>
<comment type="similarity">
    <text evidence="1">Belongs to the DNA mismatch repair MutS family.</text>
</comment>
<sequence>MTVTPMMAQYLDLKAEYADALLFYRMGDFYEMFFEDAVAAAEALDIALTKRGKHDGADIPMCGVPVHSAEGYLLTLIRKRFRVAVCEQMESPAEAKKRGSKSVVKRDVVRLVTPGTLTEETLLDARRNNYLTSFAQVRDAKALAWTDISTGAFHVMPLTALKLGPELARLAPSELICSESAENDLREVAEDFGIALTGLARAAFDSTSAEQRICDLFGVETLDSYGSFTRAEVAAMGGIIQYLDITQKGKLPLLRPPQRETENRTIQIDAATRRNLELTQALSGGRAGSLLAVIDRTITAAGGRLMSARIASPSRDLETITNRLDAVSFAQDHHDLCGALRDHLRKVPDLDRALSRLSLDRGGPRDMAAIRNGLTQSAILFETLGSHELPPLLADALNDLSRHDNLIDRLDATLVAEPPLLARDGGFIATGFDAELDEARSLRDEGRSVIARMQQEFAALTGITSLKIKHNNVLGYFIETTATHAEKMLSPPMSETFIHRQTTANQVRFTTVELSELETKILNAGGRALEIEKRLYETLKSDILACSARIAQTASALAELDLTTALATLATTDGWVRPKVDDSRAFAIENGRHPVVENALRQQSGDPFIANDCDLSAEEDAAQIYLLTGPNMAGKSTYLRQNAIIALLAQMGSFVPASCAHIGLISQLFSRVGASDDLARGRSTFMVEMVETAAILNQADDRALVILDEIGRGTATYDGLSIAWATLEHLHDVNKSRALFATHYHEMTALAGKLPGVENATVTVKEWEGEVIFLHEVKMGAADRSYGVQVAQLAGLPPAVISRARAVLDMLEKGEREGGATQKTLIDDLPLFSVAPAPAPAPAKTSDVEARLAEIHPDELTPKQALELLYQLKEAANP</sequence>
<name>MUTS_ROSDO</name>
<proteinExistence type="inferred from homology"/>
<dbReference type="EMBL" id="CP000362">
    <property type="protein sequence ID" value="ABG30138.1"/>
    <property type="molecule type" value="Genomic_DNA"/>
</dbReference>
<dbReference type="RefSeq" id="WP_011566760.1">
    <property type="nucleotide sequence ID" value="NC_008209.1"/>
</dbReference>
<dbReference type="SMR" id="Q16D05"/>
<dbReference type="STRING" id="375451.RD1_0423"/>
<dbReference type="KEGG" id="rde:RD1_0423"/>
<dbReference type="eggNOG" id="COG0249">
    <property type="taxonomic scope" value="Bacteria"/>
</dbReference>
<dbReference type="HOGENOM" id="CLU_002472_3_1_5"/>
<dbReference type="OrthoDB" id="9802448at2"/>
<dbReference type="Proteomes" id="UP000007029">
    <property type="component" value="Chromosome"/>
</dbReference>
<dbReference type="GO" id="GO:0005829">
    <property type="term" value="C:cytosol"/>
    <property type="evidence" value="ECO:0007669"/>
    <property type="project" value="TreeGrafter"/>
</dbReference>
<dbReference type="GO" id="GO:0005524">
    <property type="term" value="F:ATP binding"/>
    <property type="evidence" value="ECO:0007669"/>
    <property type="project" value="UniProtKB-UniRule"/>
</dbReference>
<dbReference type="GO" id="GO:0140664">
    <property type="term" value="F:ATP-dependent DNA damage sensor activity"/>
    <property type="evidence" value="ECO:0007669"/>
    <property type="project" value="InterPro"/>
</dbReference>
<dbReference type="GO" id="GO:0003684">
    <property type="term" value="F:damaged DNA binding"/>
    <property type="evidence" value="ECO:0007669"/>
    <property type="project" value="UniProtKB-UniRule"/>
</dbReference>
<dbReference type="GO" id="GO:0030983">
    <property type="term" value="F:mismatched DNA binding"/>
    <property type="evidence" value="ECO:0007669"/>
    <property type="project" value="InterPro"/>
</dbReference>
<dbReference type="GO" id="GO:0006298">
    <property type="term" value="P:mismatch repair"/>
    <property type="evidence" value="ECO:0007669"/>
    <property type="project" value="UniProtKB-UniRule"/>
</dbReference>
<dbReference type="CDD" id="cd03284">
    <property type="entry name" value="ABC_MutS1"/>
    <property type="match status" value="1"/>
</dbReference>
<dbReference type="FunFam" id="3.40.1170.10:FF:000001">
    <property type="entry name" value="DNA mismatch repair protein MutS"/>
    <property type="match status" value="1"/>
</dbReference>
<dbReference type="Gene3D" id="1.10.1420.10">
    <property type="match status" value="2"/>
</dbReference>
<dbReference type="Gene3D" id="6.10.140.430">
    <property type="match status" value="1"/>
</dbReference>
<dbReference type="Gene3D" id="3.40.1170.10">
    <property type="entry name" value="DNA repair protein MutS, domain I"/>
    <property type="match status" value="1"/>
</dbReference>
<dbReference type="Gene3D" id="3.30.420.110">
    <property type="entry name" value="MutS, connector domain"/>
    <property type="match status" value="1"/>
</dbReference>
<dbReference type="Gene3D" id="3.40.50.300">
    <property type="entry name" value="P-loop containing nucleotide triphosphate hydrolases"/>
    <property type="match status" value="1"/>
</dbReference>
<dbReference type="HAMAP" id="MF_00096">
    <property type="entry name" value="MutS"/>
    <property type="match status" value="1"/>
</dbReference>
<dbReference type="InterPro" id="IPR005748">
    <property type="entry name" value="DNA_mismatch_repair_MutS"/>
</dbReference>
<dbReference type="InterPro" id="IPR007695">
    <property type="entry name" value="DNA_mismatch_repair_MutS-lik_N"/>
</dbReference>
<dbReference type="InterPro" id="IPR017261">
    <property type="entry name" value="DNA_mismatch_repair_MutS/MSH"/>
</dbReference>
<dbReference type="InterPro" id="IPR000432">
    <property type="entry name" value="DNA_mismatch_repair_MutS_C"/>
</dbReference>
<dbReference type="InterPro" id="IPR007861">
    <property type="entry name" value="DNA_mismatch_repair_MutS_clamp"/>
</dbReference>
<dbReference type="InterPro" id="IPR007696">
    <property type="entry name" value="DNA_mismatch_repair_MutS_core"/>
</dbReference>
<dbReference type="InterPro" id="IPR016151">
    <property type="entry name" value="DNA_mismatch_repair_MutS_N"/>
</dbReference>
<dbReference type="InterPro" id="IPR036187">
    <property type="entry name" value="DNA_mismatch_repair_MutS_sf"/>
</dbReference>
<dbReference type="InterPro" id="IPR007860">
    <property type="entry name" value="DNA_mmatch_repair_MutS_con_dom"/>
</dbReference>
<dbReference type="InterPro" id="IPR045076">
    <property type="entry name" value="MutS"/>
</dbReference>
<dbReference type="InterPro" id="IPR036678">
    <property type="entry name" value="MutS_con_dom_sf"/>
</dbReference>
<dbReference type="InterPro" id="IPR027417">
    <property type="entry name" value="P-loop_NTPase"/>
</dbReference>
<dbReference type="NCBIfam" id="TIGR01070">
    <property type="entry name" value="mutS1"/>
    <property type="match status" value="1"/>
</dbReference>
<dbReference type="NCBIfam" id="NF003810">
    <property type="entry name" value="PRK05399.1"/>
    <property type="match status" value="1"/>
</dbReference>
<dbReference type="PANTHER" id="PTHR11361:SF34">
    <property type="entry name" value="DNA MISMATCH REPAIR PROTEIN MSH1, MITOCHONDRIAL"/>
    <property type="match status" value="1"/>
</dbReference>
<dbReference type="PANTHER" id="PTHR11361">
    <property type="entry name" value="DNA MISMATCH REPAIR PROTEIN MUTS FAMILY MEMBER"/>
    <property type="match status" value="1"/>
</dbReference>
<dbReference type="Pfam" id="PF01624">
    <property type="entry name" value="MutS_I"/>
    <property type="match status" value="1"/>
</dbReference>
<dbReference type="Pfam" id="PF05188">
    <property type="entry name" value="MutS_II"/>
    <property type="match status" value="1"/>
</dbReference>
<dbReference type="Pfam" id="PF05192">
    <property type="entry name" value="MutS_III"/>
    <property type="match status" value="1"/>
</dbReference>
<dbReference type="Pfam" id="PF05190">
    <property type="entry name" value="MutS_IV"/>
    <property type="match status" value="1"/>
</dbReference>
<dbReference type="Pfam" id="PF00488">
    <property type="entry name" value="MutS_V"/>
    <property type="match status" value="1"/>
</dbReference>
<dbReference type="PIRSF" id="PIRSF037677">
    <property type="entry name" value="DNA_mis_repair_Msh6"/>
    <property type="match status" value="1"/>
</dbReference>
<dbReference type="SMART" id="SM00534">
    <property type="entry name" value="MUTSac"/>
    <property type="match status" value="1"/>
</dbReference>
<dbReference type="SMART" id="SM00533">
    <property type="entry name" value="MUTSd"/>
    <property type="match status" value="1"/>
</dbReference>
<dbReference type="SUPFAM" id="SSF55271">
    <property type="entry name" value="DNA repair protein MutS, domain I"/>
    <property type="match status" value="1"/>
</dbReference>
<dbReference type="SUPFAM" id="SSF53150">
    <property type="entry name" value="DNA repair protein MutS, domain II"/>
    <property type="match status" value="1"/>
</dbReference>
<dbReference type="SUPFAM" id="SSF48334">
    <property type="entry name" value="DNA repair protein MutS, domain III"/>
    <property type="match status" value="1"/>
</dbReference>
<dbReference type="SUPFAM" id="SSF52540">
    <property type="entry name" value="P-loop containing nucleoside triphosphate hydrolases"/>
    <property type="match status" value="1"/>
</dbReference>
<dbReference type="PROSITE" id="PS00486">
    <property type="entry name" value="DNA_MISMATCH_REPAIR_2"/>
    <property type="match status" value="1"/>
</dbReference>
<protein>
    <recommendedName>
        <fullName evidence="1">DNA mismatch repair protein MutS</fullName>
    </recommendedName>
</protein>
<keyword id="KW-0067">ATP-binding</keyword>
<keyword id="KW-0227">DNA damage</keyword>
<keyword id="KW-0234">DNA repair</keyword>
<keyword id="KW-0238">DNA-binding</keyword>
<keyword id="KW-0547">Nucleotide-binding</keyword>
<keyword id="KW-1185">Reference proteome</keyword>
<reference key="1">
    <citation type="journal article" date="2007" name="J. Bacteriol.">
        <title>The complete genome sequence of Roseobacter denitrificans reveals a mixotrophic rather than photosynthetic metabolism.</title>
        <authorList>
            <person name="Swingley W.D."/>
            <person name="Sadekar S."/>
            <person name="Mastrian S.D."/>
            <person name="Matthies H.J."/>
            <person name="Hao J."/>
            <person name="Ramos H."/>
            <person name="Acharya C.R."/>
            <person name="Conrad A.L."/>
            <person name="Taylor H.L."/>
            <person name="Dejesa L.C."/>
            <person name="Shah M.K."/>
            <person name="O'Huallachain M.E."/>
            <person name="Lince M.T."/>
            <person name="Blankenship R.E."/>
            <person name="Beatty J.T."/>
            <person name="Touchman J.W."/>
        </authorList>
    </citation>
    <scope>NUCLEOTIDE SEQUENCE [LARGE SCALE GENOMIC DNA]</scope>
    <source>
        <strain>ATCC 33942 / OCh 114</strain>
    </source>
</reference>
<gene>
    <name evidence="1" type="primary">mutS</name>
    <name type="ordered locus">RD1_0423</name>
</gene>
<organism>
    <name type="scientific">Roseobacter denitrificans (strain ATCC 33942 / OCh 114)</name>
    <name type="common">Erythrobacter sp. (strain OCh 114)</name>
    <name type="synonym">Roseobacter denitrificans</name>
    <dbReference type="NCBI Taxonomy" id="375451"/>
    <lineage>
        <taxon>Bacteria</taxon>
        <taxon>Pseudomonadati</taxon>
        <taxon>Pseudomonadota</taxon>
        <taxon>Alphaproteobacteria</taxon>
        <taxon>Rhodobacterales</taxon>
        <taxon>Roseobacteraceae</taxon>
        <taxon>Roseobacter</taxon>
    </lineage>
</organism>
<feature type="chain" id="PRO_0000335221" description="DNA mismatch repair protein MutS">
    <location>
        <begin position="1"/>
        <end position="878"/>
    </location>
</feature>
<feature type="binding site" evidence="1">
    <location>
        <begin position="629"/>
        <end position="636"/>
    </location>
    <ligand>
        <name>ATP</name>
        <dbReference type="ChEBI" id="CHEBI:30616"/>
    </ligand>
</feature>
<accession>Q16D05</accession>
<evidence type="ECO:0000255" key="1">
    <source>
        <dbReference type="HAMAP-Rule" id="MF_00096"/>
    </source>
</evidence>